<dbReference type="EMBL" id="CP000742">
    <property type="protein sequence ID" value="ABR54796.1"/>
    <property type="molecule type" value="Genomic_DNA"/>
</dbReference>
<dbReference type="RefSeq" id="WP_011972697.1">
    <property type="nucleotide sequence ID" value="NC_009634.1"/>
</dbReference>
<dbReference type="SMR" id="A6UQM4"/>
<dbReference type="STRING" id="406327.Mevan_0891"/>
<dbReference type="GeneID" id="5326158"/>
<dbReference type="KEGG" id="mvn:Mevan_0891"/>
<dbReference type="eggNOG" id="arCOG04185">
    <property type="taxonomic scope" value="Archaea"/>
</dbReference>
<dbReference type="HOGENOM" id="CLU_090139_2_0_2"/>
<dbReference type="OrthoDB" id="6533at2157"/>
<dbReference type="Proteomes" id="UP000001107">
    <property type="component" value="Chromosome"/>
</dbReference>
<dbReference type="GO" id="GO:0022627">
    <property type="term" value="C:cytosolic small ribosomal subunit"/>
    <property type="evidence" value="ECO:0007669"/>
    <property type="project" value="TreeGrafter"/>
</dbReference>
<dbReference type="GO" id="GO:0070181">
    <property type="term" value="F:small ribosomal subunit rRNA binding"/>
    <property type="evidence" value="ECO:0007669"/>
    <property type="project" value="TreeGrafter"/>
</dbReference>
<dbReference type="GO" id="GO:0003735">
    <property type="term" value="F:structural constituent of ribosome"/>
    <property type="evidence" value="ECO:0007669"/>
    <property type="project" value="InterPro"/>
</dbReference>
<dbReference type="GO" id="GO:0006412">
    <property type="term" value="P:translation"/>
    <property type="evidence" value="ECO:0007669"/>
    <property type="project" value="UniProtKB-UniRule"/>
</dbReference>
<dbReference type="CDD" id="cd00353">
    <property type="entry name" value="Ribosomal_S15p_S13e"/>
    <property type="match status" value="1"/>
</dbReference>
<dbReference type="FunFam" id="1.10.287.10:FF:000003">
    <property type="entry name" value="40S ribosomal protein S13"/>
    <property type="match status" value="1"/>
</dbReference>
<dbReference type="Gene3D" id="4.10.860.130">
    <property type="match status" value="1"/>
</dbReference>
<dbReference type="Gene3D" id="1.10.287.10">
    <property type="entry name" value="S15/NS1, RNA-binding"/>
    <property type="match status" value="1"/>
</dbReference>
<dbReference type="HAMAP" id="MF_01343_A">
    <property type="entry name" value="Ribosomal_uS15_A"/>
    <property type="match status" value="1"/>
</dbReference>
<dbReference type="InterPro" id="IPR000589">
    <property type="entry name" value="Ribosomal_uS15"/>
</dbReference>
<dbReference type="InterPro" id="IPR023029">
    <property type="entry name" value="Ribosomal_uS15_arc_euk"/>
</dbReference>
<dbReference type="InterPro" id="IPR012606">
    <property type="entry name" value="Ribosomal_uS15_N"/>
</dbReference>
<dbReference type="InterPro" id="IPR009068">
    <property type="entry name" value="uS15_NS1_RNA-bd_sf"/>
</dbReference>
<dbReference type="NCBIfam" id="NF006331">
    <property type="entry name" value="PRK08561.1"/>
    <property type="match status" value="1"/>
</dbReference>
<dbReference type="PANTHER" id="PTHR11885">
    <property type="entry name" value="RIBOSOMAL PROTEIN S15P/S13E"/>
    <property type="match status" value="1"/>
</dbReference>
<dbReference type="PANTHER" id="PTHR11885:SF6">
    <property type="entry name" value="SMALL RIBOSOMAL SUBUNIT PROTEIN US15"/>
    <property type="match status" value="1"/>
</dbReference>
<dbReference type="Pfam" id="PF08069">
    <property type="entry name" value="Ribosomal_S13_N"/>
    <property type="match status" value="1"/>
</dbReference>
<dbReference type="Pfam" id="PF00312">
    <property type="entry name" value="Ribosomal_S15"/>
    <property type="match status" value="1"/>
</dbReference>
<dbReference type="SMART" id="SM01386">
    <property type="entry name" value="Ribosomal_S13_N"/>
    <property type="match status" value="1"/>
</dbReference>
<dbReference type="SMART" id="SM01387">
    <property type="entry name" value="Ribosomal_S15"/>
    <property type="match status" value="1"/>
</dbReference>
<dbReference type="SUPFAM" id="SSF47060">
    <property type="entry name" value="S15/NS1 RNA-binding domain"/>
    <property type="match status" value="1"/>
</dbReference>
<dbReference type="PROSITE" id="PS00362">
    <property type="entry name" value="RIBOSOMAL_S15"/>
    <property type="match status" value="1"/>
</dbReference>
<protein>
    <recommendedName>
        <fullName evidence="1">Small ribosomal subunit protein uS15</fullName>
    </recommendedName>
    <alternativeName>
        <fullName evidence="3">30S ribosomal protein S15</fullName>
    </alternativeName>
</protein>
<organism>
    <name type="scientific">Methanococcus vannielii (strain ATCC 35089 / DSM 1224 / JCM 13029 / OCM 148 / SB)</name>
    <dbReference type="NCBI Taxonomy" id="406327"/>
    <lineage>
        <taxon>Archaea</taxon>
        <taxon>Methanobacteriati</taxon>
        <taxon>Methanobacteriota</taxon>
        <taxon>Methanomada group</taxon>
        <taxon>Methanococci</taxon>
        <taxon>Methanococcales</taxon>
        <taxon>Methanococcaceae</taxon>
        <taxon>Methanococcus</taxon>
    </lineage>
</organism>
<evidence type="ECO:0000255" key="1">
    <source>
        <dbReference type="HAMAP-Rule" id="MF_01343"/>
    </source>
</evidence>
<evidence type="ECO:0000256" key="2">
    <source>
        <dbReference type="SAM" id="MobiDB-lite"/>
    </source>
</evidence>
<evidence type="ECO:0000305" key="3"/>
<reference key="1">
    <citation type="submission" date="2007-06" db="EMBL/GenBank/DDBJ databases">
        <title>Complete sequence of Methanococcus vannielii SB.</title>
        <authorList>
            <consortium name="US DOE Joint Genome Institute"/>
            <person name="Copeland A."/>
            <person name="Lucas S."/>
            <person name="Lapidus A."/>
            <person name="Barry K."/>
            <person name="Glavina del Rio T."/>
            <person name="Dalin E."/>
            <person name="Tice H."/>
            <person name="Pitluck S."/>
            <person name="Chain P."/>
            <person name="Malfatti S."/>
            <person name="Shin M."/>
            <person name="Vergez L."/>
            <person name="Schmutz J."/>
            <person name="Larimer F."/>
            <person name="Land M."/>
            <person name="Hauser L."/>
            <person name="Kyrpides N."/>
            <person name="Anderson I."/>
            <person name="Sieprawska-Lupa M."/>
            <person name="Whitman W.B."/>
            <person name="Richardson P."/>
        </authorList>
    </citation>
    <scope>NUCLEOTIDE SEQUENCE [LARGE SCALE GENOMIC DNA]</scope>
    <source>
        <strain>ATCC 35089 / DSM 1224 / JCM 13029 / OCM 148 / SB</strain>
    </source>
</reference>
<accession>A6UQM4</accession>
<keyword id="KW-0687">Ribonucleoprotein</keyword>
<keyword id="KW-0689">Ribosomal protein</keyword>
<sequence>MARLHSGKRGSSGSTKPLRTEVPEWVSMSAEEVQAKIVEMAKDGNQSAIIGNILRDMYGIPNVKLVTGKSVSSIMKDAGFYSEVPEDLFNLMKKAINLRNHLENNPRDIHSKVGLNLIESKIRRLVKYYKGTKVLPATWRYSPQTARLLVE</sequence>
<gene>
    <name evidence="1" type="primary">rps15</name>
    <name type="ordered locus">Mevan_0891</name>
</gene>
<name>RS15_METVS</name>
<comment type="subunit">
    <text evidence="1">Part of the 30S ribosomal subunit.</text>
</comment>
<comment type="similarity">
    <text evidence="1">Belongs to the universal ribosomal protein uS15 family.</text>
</comment>
<proteinExistence type="inferred from homology"/>
<feature type="chain" id="PRO_1000054816" description="Small ribosomal subunit protein uS15">
    <location>
        <begin position="1"/>
        <end position="151"/>
    </location>
</feature>
<feature type="region of interest" description="Disordered" evidence="2">
    <location>
        <begin position="1"/>
        <end position="20"/>
    </location>
</feature>